<reference key="1">
    <citation type="journal article" date="2006" name="Mol. Microbiol.">
        <title>Role of pathogenicity island-associated integrases in the genome plasticity of uropathogenic Escherichia coli strain 536.</title>
        <authorList>
            <person name="Hochhut B."/>
            <person name="Wilde C."/>
            <person name="Balling G."/>
            <person name="Middendorf B."/>
            <person name="Dobrindt U."/>
            <person name="Brzuszkiewicz E."/>
            <person name="Gottschalk G."/>
            <person name="Carniel E."/>
            <person name="Hacker J."/>
        </authorList>
    </citation>
    <scope>NUCLEOTIDE SEQUENCE [LARGE SCALE GENOMIC DNA]</scope>
    <source>
        <strain>536 / UPEC</strain>
    </source>
</reference>
<keyword id="KW-0223">Dioxygenase</keyword>
<keyword id="KW-0408">Iron</keyword>
<keyword id="KW-0479">Metal-binding</keyword>
<keyword id="KW-0560">Oxidoreductase</keyword>
<feature type="chain" id="PRO_1000064809" description="Glutarate 2-hydroxylase">
    <location>
        <begin position="1"/>
        <end position="325"/>
    </location>
</feature>
<feature type="binding site" evidence="1">
    <location>
        <position position="160"/>
    </location>
    <ligand>
        <name>Fe cation</name>
        <dbReference type="ChEBI" id="CHEBI:24875"/>
    </ligand>
</feature>
<feature type="binding site" evidence="1">
    <location>
        <position position="162"/>
    </location>
    <ligand>
        <name>Fe cation</name>
        <dbReference type="ChEBI" id="CHEBI:24875"/>
    </ligand>
</feature>
<feature type="binding site" evidence="1">
    <location>
        <position position="292"/>
    </location>
    <ligand>
        <name>Fe cation</name>
        <dbReference type="ChEBI" id="CHEBI:24875"/>
    </ligand>
</feature>
<evidence type="ECO:0000255" key="1">
    <source>
        <dbReference type="HAMAP-Rule" id="MF_01083"/>
    </source>
</evidence>
<protein>
    <recommendedName>
        <fullName evidence="1">Glutarate 2-hydroxylase</fullName>
        <shortName evidence="1">G-2-H</shortName>
        <ecNumber evidence="1">1.14.11.64</ecNumber>
    </recommendedName>
</protein>
<dbReference type="EC" id="1.14.11.64" evidence="1"/>
<dbReference type="EMBL" id="CP000247">
    <property type="protein sequence ID" value="ABG70611.1"/>
    <property type="molecule type" value="Genomic_DNA"/>
</dbReference>
<dbReference type="RefSeq" id="WP_000993122.1">
    <property type="nucleotide sequence ID" value="NC_008253.1"/>
</dbReference>
<dbReference type="SMR" id="Q0TEL8"/>
<dbReference type="KEGG" id="ecp:ECP_2622"/>
<dbReference type="HOGENOM" id="CLU_075277_0_0_6"/>
<dbReference type="Proteomes" id="UP000009182">
    <property type="component" value="Chromosome"/>
</dbReference>
<dbReference type="GO" id="GO:0008198">
    <property type="term" value="F:ferrous iron binding"/>
    <property type="evidence" value="ECO:0007669"/>
    <property type="project" value="UniProtKB-UniRule"/>
</dbReference>
<dbReference type="GO" id="GO:0106343">
    <property type="term" value="F:glutarate dioxygenase activity"/>
    <property type="evidence" value="ECO:0007669"/>
    <property type="project" value="UniProtKB-EC"/>
</dbReference>
<dbReference type="GO" id="GO:0050498">
    <property type="term" value="F:oxidoreductase activity, acting on paired donors, with incorporation or reduction of molecular oxygen, with 2-oxoglutarate as one donor, and the other dehydrogenated"/>
    <property type="evidence" value="ECO:0007669"/>
    <property type="project" value="UniProtKB-UniRule"/>
</dbReference>
<dbReference type="GO" id="GO:0019477">
    <property type="term" value="P:L-lysine catabolic process"/>
    <property type="evidence" value="ECO:0007669"/>
    <property type="project" value="UniProtKB-UniRule"/>
</dbReference>
<dbReference type="CDD" id="cd00250">
    <property type="entry name" value="CAS_like"/>
    <property type="match status" value="1"/>
</dbReference>
<dbReference type="FunFam" id="3.60.130.10:FF:000004">
    <property type="entry name" value="Glutarate 2-hydroxylase"/>
    <property type="match status" value="1"/>
</dbReference>
<dbReference type="Gene3D" id="3.60.130.10">
    <property type="entry name" value="Clavaminate synthase-like"/>
    <property type="match status" value="1"/>
</dbReference>
<dbReference type="HAMAP" id="MF_01083">
    <property type="entry name" value="glutarate_hydroxylase"/>
    <property type="match status" value="1"/>
</dbReference>
<dbReference type="InterPro" id="IPR015038">
    <property type="entry name" value="GlaH"/>
</dbReference>
<dbReference type="InterPro" id="IPR042098">
    <property type="entry name" value="TauD-like_sf"/>
</dbReference>
<dbReference type="NCBIfam" id="NF002814">
    <property type="entry name" value="PRK02963.1"/>
    <property type="match status" value="1"/>
</dbReference>
<dbReference type="Pfam" id="PF08943">
    <property type="entry name" value="CsiD"/>
    <property type="match status" value="1"/>
</dbReference>
<dbReference type="SUPFAM" id="SSF51197">
    <property type="entry name" value="Clavaminate synthase-like"/>
    <property type="match status" value="1"/>
</dbReference>
<organism>
    <name type="scientific">Escherichia coli O6:K15:H31 (strain 536 / UPEC)</name>
    <dbReference type="NCBI Taxonomy" id="362663"/>
    <lineage>
        <taxon>Bacteria</taxon>
        <taxon>Pseudomonadati</taxon>
        <taxon>Pseudomonadota</taxon>
        <taxon>Gammaproteobacteria</taxon>
        <taxon>Enterobacterales</taxon>
        <taxon>Enterobacteriaceae</taxon>
        <taxon>Escherichia</taxon>
    </lineage>
</organism>
<accession>Q0TEL8</accession>
<name>GLAH_ECOL5</name>
<sequence>MNALTAVQNNAVDSGQDYSGFTLIPSAQSPRLLELTFTEQTTNRFLEQVAEWPVQALEYKSFLRFRVGKILDDLCANQLQPLLLKTLLNRAEGALLINAVGIDDVAQADEMVKLATAVAHLIGRSNFDAMSGQYYARFVVKNVDNSDSYLRQPHRVMELHNDGTYVEEITDYVLMMKIDEQNMQGGNSLLLHLDDWEHLGLFFRHPLARRPMRFAAPPSKNVSKDVFHPVFDVDQQGRPVMRYIDQFVQPKDFEEGVWLSELSDAIETSKGILSVPVPVGKFLLINNLFWLHGRDRFTPHPDLRRELMRQRGYFAYATHHYQTHQ</sequence>
<proteinExistence type="inferred from homology"/>
<gene>
    <name evidence="1" type="primary">glaH</name>
    <name type="ordered locus">ECP_2622</name>
</gene>
<comment type="function">
    <text evidence="1">Acts as an alpha-ketoglutarate-dependent dioxygenase catalyzing hydroxylation of glutarate (GA) to L-2-hydroxyglutarate (L2HG). Functions in a L-lysine degradation pathway that proceeds via cadaverine, glutarate and L-2-hydroxyglutarate.</text>
</comment>
<comment type="catalytic activity">
    <reaction evidence="1">
        <text>glutarate + 2-oxoglutarate + O2 = (S)-2-hydroxyglutarate + succinate + CO2</text>
        <dbReference type="Rhea" id="RHEA:13821"/>
        <dbReference type="ChEBI" id="CHEBI:15379"/>
        <dbReference type="ChEBI" id="CHEBI:16526"/>
        <dbReference type="ChEBI" id="CHEBI:16782"/>
        <dbReference type="ChEBI" id="CHEBI:16810"/>
        <dbReference type="ChEBI" id="CHEBI:30031"/>
        <dbReference type="ChEBI" id="CHEBI:30921"/>
        <dbReference type="EC" id="1.14.11.64"/>
    </reaction>
    <physiologicalReaction direction="left-to-right" evidence="1">
        <dbReference type="Rhea" id="RHEA:13822"/>
    </physiologicalReaction>
</comment>
<comment type="cofactor">
    <cofactor evidence="1">
        <name>Fe(2+)</name>
        <dbReference type="ChEBI" id="CHEBI:29033"/>
    </cofactor>
    <text evidence="1">Binds 1 Fe(2+) ion per subunit.</text>
</comment>
<comment type="pathway">
    <text evidence="1">Amino-acid degradation.</text>
</comment>
<comment type="subunit">
    <text evidence="1">Homotetramer.</text>
</comment>
<comment type="similarity">
    <text evidence="1">Belongs to the glutarate hydroxylase family.</text>
</comment>